<evidence type="ECO:0000255" key="1">
    <source>
        <dbReference type="HAMAP-Rule" id="MF_00375"/>
    </source>
</evidence>
<organism>
    <name type="scientific">Campylobacter jejuni subsp. jejuni serotype O:6 (strain 81116 / NCTC 11828)</name>
    <dbReference type="NCBI Taxonomy" id="407148"/>
    <lineage>
        <taxon>Bacteria</taxon>
        <taxon>Pseudomonadati</taxon>
        <taxon>Campylobacterota</taxon>
        <taxon>Epsilonproteobacteria</taxon>
        <taxon>Campylobacterales</taxon>
        <taxon>Campylobacteraceae</taxon>
        <taxon>Campylobacter</taxon>
    </lineage>
</organism>
<keyword id="KW-0963">Cytoplasm</keyword>
<keyword id="KW-0413">Isomerase</keyword>
<keyword id="KW-0627">Porphyrin biosynthesis</keyword>
<keyword id="KW-0663">Pyridoxal phosphate</keyword>
<proteinExistence type="inferred from homology"/>
<accession>A8FLR2</accession>
<feature type="chain" id="PRO_1000072152" description="Glutamate-1-semialdehyde 2,1-aminomutase">
    <location>
        <begin position="1"/>
        <end position="424"/>
    </location>
</feature>
<feature type="modified residue" description="N6-(pyridoxal phosphate)lysine" evidence="1">
    <location>
        <position position="263"/>
    </location>
</feature>
<name>GSA_CAMJ8</name>
<reference key="1">
    <citation type="journal article" date="2007" name="J. Bacteriol.">
        <title>The complete genome sequence of Campylobacter jejuni strain 81116 (NCTC11828).</title>
        <authorList>
            <person name="Pearson B.M."/>
            <person name="Gaskin D.J.H."/>
            <person name="Segers R.P.A.M."/>
            <person name="Wells J.M."/>
            <person name="Nuijten P.J.M."/>
            <person name="van Vliet A.H.M."/>
        </authorList>
    </citation>
    <scope>NUCLEOTIDE SEQUENCE [LARGE SCALE GENOMIC DNA]</scope>
    <source>
        <strain>81116 / NCTC 11828</strain>
    </source>
</reference>
<protein>
    <recommendedName>
        <fullName evidence="1">Glutamate-1-semialdehyde 2,1-aminomutase</fullName>
        <shortName evidence="1">GSA</shortName>
        <ecNumber evidence="1">5.4.3.8</ecNumber>
    </recommendedName>
    <alternativeName>
        <fullName evidence="1">Glutamate-1-semialdehyde aminotransferase</fullName>
        <shortName evidence="1">GSA-AT</shortName>
    </alternativeName>
</protein>
<comment type="catalytic activity">
    <reaction evidence="1">
        <text>(S)-4-amino-5-oxopentanoate = 5-aminolevulinate</text>
        <dbReference type="Rhea" id="RHEA:14265"/>
        <dbReference type="ChEBI" id="CHEBI:57501"/>
        <dbReference type="ChEBI" id="CHEBI:356416"/>
        <dbReference type="EC" id="5.4.3.8"/>
    </reaction>
</comment>
<comment type="cofactor">
    <cofactor evidence="1">
        <name>pyridoxal 5'-phosphate</name>
        <dbReference type="ChEBI" id="CHEBI:597326"/>
    </cofactor>
</comment>
<comment type="pathway">
    <text evidence="1">Porphyrin-containing compound metabolism; protoporphyrin-IX biosynthesis; 5-aminolevulinate from L-glutamyl-tRNA(Glu): step 2/2.</text>
</comment>
<comment type="subunit">
    <text evidence="1">Homodimer.</text>
</comment>
<comment type="subcellular location">
    <subcellularLocation>
        <location evidence="1">Cytoplasm</location>
    </subcellularLocation>
</comment>
<comment type="similarity">
    <text evidence="1">Belongs to the class-III pyridoxal-phosphate-dependent aminotransferase family. HemL subfamily.</text>
</comment>
<gene>
    <name evidence="1" type="primary">hemL</name>
    <name type="ordered locus">C8J_0800</name>
</gene>
<dbReference type="EC" id="5.4.3.8" evidence="1"/>
<dbReference type="EMBL" id="CP000814">
    <property type="protein sequence ID" value="ABV52399.1"/>
    <property type="molecule type" value="Genomic_DNA"/>
</dbReference>
<dbReference type="RefSeq" id="WP_002866940.1">
    <property type="nucleotide sequence ID" value="NC_009839.1"/>
</dbReference>
<dbReference type="SMR" id="A8FLR2"/>
<dbReference type="KEGG" id="cju:C8J_0800"/>
<dbReference type="HOGENOM" id="CLU_016922_1_5_7"/>
<dbReference type="UniPathway" id="UPA00251">
    <property type="reaction ID" value="UER00317"/>
</dbReference>
<dbReference type="GO" id="GO:0005737">
    <property type="term" value="C:cytoplasm"/>
    <property type="evidence" value="ECO:0007669"/>
    <property type="project" value="UniProtKB-SubCell"/>
</dbReference>
<dbReference type="GO" id="GO:0042286">
    <property type="term" value="F:glutamate-1-semialdehyde 2,1-aminomutase activity"/>
    <property type="evidence" value="ECO:0007669"/>
    <property type="project" value="UniProtKB-UniRule"/>
</dbReference>
<dbReference type="GO" id="GO:0030170">
    <property type="term" value="F:pyridoxal phosphate binding"/>
    <property type="evidence" value="ECO:0007669"/>
    <property type="project" value="InterPro"/>
</dbReference>
<dbReference type="GO" id="GO:0008483">
    <property type="term" value="F:transaminase activity"/>
    <property type="evidence" value="ECO:0007669"/>
    <property type="project" value="InterPro"/>
</dbReference>
<dbReference type="GO" id="GO:0006782">
    <property type="term" value="P:protoporphyrinogen IX biosynthetic process"/>
    <property type="evidence" value="ECO:0007669"/>
    <property type="project" value="UniProtKB-UniRule"/>
</dbReference>
<dbReference type="CDD" id="cd00610">
    <property type="entry name" value="OAT_like"/>
    <property type="match status" value="1"/>
</dbReference>
<dbReference type="FunFam" id="3.40.640.10:FF:000021">
    <property type="entry name" value="Glutamate-1-semialdehyde 2,1-aminomutase"/>
    <property type="match status" value="1"/>
</dbReference>
<dbReference type="Gene3D" id="3.90.1150.10">
    <property type="entry name" value="Aspartate Aminotransferase, domain 1"/>
    <property type="match status" value="1"/>
</dbReference>
<dbReference type="Gene3D" id="3.40.640.10">
    <property type="entry name" value="Type I PLP-dependent aspartate aminotransferase-like (Major domain)"/>
    <property type="match status" value="1"/>
</dbReference>
<dbReference type="HAMAP" id="MF_00375">
    <property type="entry name" value="HemL_aminotrans_3"/>
    <property type="match status" value="1"/>
</dbReference>
<dbReference type="InterPro" id="IPR004639">
    <property type="entry name" value="4pyrrol_synth_GluAld_NH2Trfase"/>
</dbReference>
<dbReference type="InterPro" id="IPR005814">
    <property type="entry name" value="Aminotrans_3"/>
</dbReference>
<dbReference type="InterPro" id="IPR049704">
    <property type="entry name" value="Aminotrans_3_PPA_site"/>
</dbReference>
<dbReference type="InterPro" id="IPR015424">
    <property type="entry name" value="PyrdxlP-dep_Trfase"/>
</dbReference>
<dbReference type="InterPro" id="IPR015421">
    <property type="entry name" value="PyrdxlP-dep_Trfase_major"/>
</dbReference>
<dbReference type="InterPro" id="IPR015422">
    <property type="entry name" value="PyrdxlP-dep_Trfase_small"/>
</dbReference>
<dbReference type="NCBIfam" id="TIGR00713">
    <property type="entry name" value="hemL"/>
    <property type="match status" value="1"/>
</dbReference>
<dbReference type="NCBIfam" id="NF000818">
    <property type="entry name" value="PRK00062.1"/>
    <property type="match status" value="1"/>
</dbReference>
<dbReference type="PANTHER" id="PTHR43713">
    <property type="entry name" value="GLUTAMATE-1-SEMIALDEHYDE 2,1-AMINOMUTASE"/>
    <property type="match status" value="1"/>
</dbReference>
<dbReference type="PANTHER" id="PTHR43713:SF3">
    <property type="entry name" value="GLUTAMATE-1-SEMIALDEHYDE 2,1-AMINOMUTASE 1, CHLOROPLASTIC-RELATED"/>
    <property type="match status" value="1"/>
</dbReference>
<dbReference type="Pfam" id="PF00202">
    <property type="entry name" value="Aminotran_3"/>
    <property type="match status" value="1"/>
</dbReference>
<dbReference type="SUPFAM" id="SSF53383">
    <property type="entry name" value="PLP-dependent transferases"/>
    <property type="match status" value="1"/>
</dbReference>
<dbReference type="PROSITE" id="PS00600">
    <property type="entry name" value="AA_TRANSFER_CLASS_3"/>
    <property type="match status" value="1"/>
</dbReference>
<sequence length="424" mass="46062">MTNKKAFKEACKFIAGGVNSPVRAFANVQSEPKFISHGKGAYIFDIDGNSYIDYVQSWGPLLFGHCDKDIQKACQKALHKGSSFGAPTLLETELAKLVLSDFPHLEKIRFVSSGTEATMSAIRLARGFTKKDKILKFEGCYHGHSDSLLVSAGSGAATFNSPSSLGVLEDVAKHTLVAKYNDINSVKELFEKNKDIACVIIEPIAGNMGLVPAKQDFLEELAKICKNNQTLLIFDEVMSGYRASYLGSYGINHIQADIITFGKVIGGGLPAAAFASRAEIMDILSPLGGVYQAGTLSGNPLAMAAGIASLTKAKKKTKLYDKLGKLAKKLTQGMKKLADEKGLPLQACHVGSMFGYFFTKDPVSNYQDALKSDLALFSKFHKNMLENGIYLAPSQFETGFICSKMDDKIIDTTLEAVRESFKRI</sequence>